<protein>
    <recommendedName>
        <fullName evidence="1">UPF0387 membrane protein YohO</fullName>
    </recommendedName>
</protein>
<feature type="chain" id="PRO_1000143733" description="UPF0387 membrane protein YohO">
    <location>
        <begin position="1"/>
        <end position="35"/>
    </location>
</feature>
<feature type="transmembrane region" description="Helical" evidence="1">
    <location>
        <begin position="6"/>
        <end position="26"/>
    </location>
</feature>
<keyword id="KW-0997">Cell inner membrane</keyword>
<keyword id="KW-1003">Cell membrane</keyword>
<keyword id="KW-0472">Membrane</keyword>
<keyword id="KW-0812">Transmembrane</keyword>
<keyword id="KW-1133">Transmembrane helix</keyword>
<reference key="1">
    <citation type="journal article" date="2009" name="PLoS Genet.">
        <title>Organised genome dynamics in the Escherichia coli species results in highly diverse adaptive paths.</title>
        <authorList>
            <person name="Touchon M."/>
            <person name="Hoede C."/>
            <person name="Tenaillon O."/>
            <person name="Barbe V."/>
            <person name="Baeriswyl S."/>
            <person name="Bidet P."/>
            <person name="Bingen E."/>
            <person name="Bonacorsi S."/>
            <person name="Bouchier C."/>
            <person name="Bouvet O."/>
            <person name="Calteau A."/>
            <person name="Chiapello H."/>
            <person name="Clermont O."/>
            <person name="Cruveiller S."/>
            <person name="Danchin A."/>
            <person name="Diard M."/>
            <person name="Dossat C."/>
            <person name="Karoui M.E."/>
            <person name="Frapy E."/>
            <person name="Garry L."/>
            <person name="Ghigo J.M."/>
            <person name="Gilles A.M."/>
            <person name="Johnson J."/>
            <person name="Le Bouguenec C."/>
            <person name="Lescat M."/>
            <person name="Mangenot S."/>
            <person name="Martinez-Jehanne V."/>
            <person name="Matic I."/>
            <person name="Nassif X."/>
            <person name="Oztas S."/>
            <person name="Petit M.A."/>
            <person name="Pichon C."/>
            <person name="Rouy Z."/>
            <person name="Ruf C.S."/>
            <person name="Schneider D."/>
            <person name="Tourret J."/>
            <person name="Vacherie B."/>
            <person name="Vallenet D."/>
            <person name="Medigue C."/>
            <person name="Rocha E.P.C."/>
            <person name="Denamur E."/>
        </authorList>
    </citation>
    <scope>NUCLEOTIDE SEQUENCE [LARGE SCALE GENOMIC DNA]</scope>
    <source>
        <strain>IAI1</strain>
    </source>
</reference>
<comment type="subcellular location">
    <subcellularLocation>
        <location evidence="1">Cell inner membrane</location>
        <topology evidence="1">Single-pass membrane protein</topology>
    </subcellularLocation>
</comment>
<comment type="similarity">
    <text evidence="1">Belongs to the UPF0387 family.</text>
</comment>
<sequence length="35" mass="3677">MRIAKIGVIALFLFMAFGGIGGVMLAGYTFILRAG</sequence>
<organism>
    <name type="scientific">Escherichia coli O8 (strain IAI1)</name>
    <dbReference type="NCBI Taxonomy" id="585034"/>
    <lineage>
        <taxon>Bacteria</taxon>
        <taxon>Pseudomonadati</taxon>
        <taxon>Pseudomonadota</taxon>
        <taxon>Gammaproteobacteria</taxon>
        <taxon>Enterobacterales</taxon>
        <taxon>Enterobacteriaceae</taxon>
        <taxon>Escherichia</taxon>
    </lineage>
</organism>
<evidence type="ECO:0000255" key="1">
    <source>
        <dbReference type="HAMAP-Rule" id="MF_01362"/>
    </source>
</evidence>
<accession>B7M4X3</accession>
<dbReference type="EMBL" id="CU928160">
    <property type="protein sequence ID" value="CAQ99050.1"/>
    <property type="molecule type" value="Genomic_DNA"/>
</dbReference>
<dbReference type="RefSeq" id="WP_001216961.1">
    <property type="nucleotide sequence ID" value="NC_011741.1"/>
</dbReference>
<dbReference type="KEGG" id="ecr:ECIAI1_2205"/>
<dbReference type="HOGENOM" id="CLU_220259_0_0_6"/>
<dbReference type="GO" id="GO:0005886">
    <property type="term" value="C:plasma membrane"/>
    <property type="evidence" value="ECO:0007669"/>
    <property type="project" value="UniProtKB-SubCell"/>
</dbReference>
<dbReference type="HAMAP" id="MF_01362">
    <property type="entry name" value="UPF0387"/>
    <property type="match status" value="1"/>
</dbReference>
<dbReference type="InterPro" id="IPR020870">
    <property type="entry name" value="UPF0387_membrane"/>
</dbReference>
<dbReference type="NCBIfam" id="NF010225">
    <property type="entry name" value="PRK13681.1"/>
    <property type="match status" value="1"/>
</dbReference>
<name>YOHO_ECO8A</name>
<gene>
    <name evidence="1" type="primary">yohO</name>
    <name type="ordered locus">ECIAI1_2205</name>
</gene>
<proteinExistence type="inferred from homology"/>